<evidence type="ECO:0000255" key="1">
    <source>
        <dbReference type="HAMAP-Rule" id="MF_01530"/>
    </source>
</evidence>
<keyword id="KW-0046">Antibiotic resistance</keyword>
<keyword id="KW-0997">Cell inner membrane</keyword>
<keyword id="KW-1003">Cell membrane</keyword>
<keyword id="KW-0472">Membrane</keyword>
<keyword id="KW-0812">Transmembrane</keyword>
<keyword id="KW-1133">Transmembrane helix</keyword>
<keyword id="KW-0813">Transport</keyword>
<sequence>MSRFLICSFALVLLYPAGIDMYLVGLPRIAADLNASEAQLHIAFSVYLAGMAAAMLFAGKVADRSGRKPVAIPGAALFIIASVFCSLAETSTLFLAGRFLQGLGAGCCYVVAFAILRDTLDDRRRAKVLSLLNGITCIIPVLAPVLGHLIMLKFPWQSLFWTMAMMGIAVLMLSLFILKETRPASPAASDKPRENSESLLNRFFLSRVVITTLSVSVILTFVNTSPVLLMEIMGFERGEYATIMALTAGVSMTVSFSTPFALGIFKPRTLMITSQVLFLAAGITLAVSPSHAVSLFGITLICAGFSVGFGVAMSQALGPFSLRAGVASSTLGIAQVCGSSLWIWLAAVVGIGAWNMLIGILIACSIVSLLLIMFVAPGRPVAAHEEIHHHA</sequence>
<feature type="chain" id="PRO_1000200823" description="Multidrug resistance protein MdtL">
    <location>
        <begin position="1"/>
        <end position="391"/>
    </location>
</feature>
<feature type="transmembrane region" description="Helical" evidence="1">
    <location>
        <begin position="4"/>
        <end position="24"/>
    </location>
</feature>
<feature type="transmembrane region" description="Helical" evidence="1">
    <location>
        <begin position="42"/>
        <end position="62"/>
    </location>
</feature>
<feature type="transmembrane region" description="Helical" evidence="1">
    <location>
        <begin position="69"/>
        <end position="89"/>
    </location>
</feature>
<feature type="transmembrane region" description="Helical" evidence="1">
    <location>
        <begin position="93"/>
        <end position="113"/>
    </location>
</feature>
<feature type="transmembrane region" description="Helical" evidence="1">
    <location>
        <begin position="131"/>
        <end position="151"/>
    </location>
</feature>
<feature type="transmembrane region" description="Helical" evidence="1">
    <location>
        <begin position="158"/>
        <end position="178"/>
    </location>
</feature>
<feature type="transmembrane region" description="Helical" evidence="1">
    <location>
        <begin position="203"/>
        <end position="222"/>
    </location>
</feature>
<feature type="transmembrane region" description="Helical" evidence="1">
    <location>
        <begin position="245"/>
        <end position="265"/>
    </location>
</feature>
<feature type="transmembrane region" description="Helical" evidence="1">
    <location>
        <begin position="269"/>
        <end position="289"/>
    </location>
</feature>
<feature type="transmembrane region" description="Helical" evidence="1">
    <location>
        <begin position="293"/>
        <end position="313"/>
    </location>
</feature>
<feature type="transmembrane region" description="Helical" evidence="1">
    <location>
        <begin position="331"/>
        <end position="351"/>
    </location>
</feature>
<feature type="transmembrane region" description="Helical" evidence="1">
    <location>
        <begin position="356"/>
        <end position="376"/>
    </location>
</feature>
<accession>B7M562</accession>
<comment type="function">
    <text evidence="1">Confers resistance to chloramphenicol.</text>
</comment>
<comment type="subcellular location">
    <subcellularLocation>
        <location evidence="1">Cell inner membrane</location>
        <topology evidence="1">Multi-pass membrane protein</topology>
    </subcellularLocation>
</comment>
<comment type="similarity">
    <text evidence="1">Belongs to the major facilitator superfamily. DHA1 family. MdtL (TC 2.A.1.2.22) subfamily.</text>
</comment>
<reference key="1">
    <citation type="journal article" date="2009" name="PLoS Genet.">
        <title>Organised genome dynamics in the Escherichia coli species results in highly diverse adaptive paths.</title>
        <authorList>
            <person name="Touchon M."/>
            <person name="Hoede C."/>
            <person name="Tenaillon O."/>
            <person name="Barbe V."/>
            <person name="Baeriswyl S."/>
            <person name="Bidet P."/>
            <person name="Bingen E."/>
            <person name="Bonacorsi S."/>
            <person name="Bouchier C."/>
            <person name="Bouvet O."/>
            <person name="Calteau A."/>
            <person name="Chiapello H."/>
            <person name="Clermont O."/>
            <person name="Cruveiller S."/>
            <person name="Danchin A."/>
            <person name="Diard M."/>
            <person name="Dossat C."/>
            <person name="Karoui M.E."/>
            <person name="Frapy E."/>
            <person name="Garry L."/>
            <person name="Ghigo J.M."/>
            <person name="Gilles A.M."/>
            <person name="Johnson J."/>
            <person name="Le Bouguenec C."/>
            <person name="Lescat M."/>
            <person name="Mangenot S."/>
            <person name="Martinez-Jehanne V."/>
            <person name="Matic I."/>
            <person name="Nassif X."/>
            <person name="Oztas S."/>
            <person name="Petit M.A."/>
            <person name="Pichon C."/>
            <person name="Rouy Z."/>
            <person name="Ruf C.S."/>
            <person name="Schneider D."/>
            <person name="Tourret J."/>
            <person name="Vacherie B."/>
            <person name="Vallenet D."/>
            <person name="Medigue C."/>
            <person name="Rocha E.P.C."/>
            <person name="Denamur E."/>
        </authorList>
    </citation>
    <scope>NUCLEOTIDE SEQUENCE [LARGE SCALE GENOMIC DNA]</scope>
    <source>
        <strain>IAI1</strain>
    </source>
</reference>
<proteinExistence type="inferred from homology"/>
<dbReference type="EMBL" id="CU928160">
    <property type="protein sequence ID" value="CAR00684.1"/>
    <property type="molecule type" value="Genomic_DNA"/>
</dbReference>
<dbReference type="RefSeq" id="WP_000086001.1">
    <property type="nucleotide sequence ID" value="NC_011741.1"/>
</dbReference>
<dbReference type="SMR" id="B7M562"/>
<dbReference type="KEGG" id="ecr:ECIAI1_3890"/>
<dbReference type="HOGENOM" id="CLU_001265_47_1_6"/>
<dbReference type="GO" id="GO:0005886">
    <property type="term" value="C:plasma membrane"/>
    <property type="evidence" value="ECO:0007669"/>
    <property type="project" value="UniProtKB-SubCell"/>
</dbReference>
<dbReference type="GO" id="GO:0022857">
    <property type="term" value="F:transmembrane transporter activity"/>
    <property type="evidence" value="ECO:0007669"/>
    <property type="project" value="UniProtKB-UniRule"/>
</dbReference>
<dbReference type="GO" id="GO:0046677">
    <property type="term" value="P:response to antibiotic"/>
    <property type="evidence" value="ECO:0007669"/>
    <property type="project" value="UniProtKB-KW"/>
</dbReference>
<dbReference type="CDD" id="cd17320">
    <property type="entry name" value="MFS_MdfA_MDR_like"/>
    <property type="match status" value="1"/>
</dbReference>
<dbReference type="FunFam" id="1.20.1720.10:FF:000003">
    <property type="entry name" value="Multidrug resistance protein MdtL"/>
    <property type="match status" value="1"/>
</dbReference>
<dbReference type="Gene3D" id="1.20.1720.10">
    <property type="entry name" value="Multidrug resistance protein D"/>
    <property type="match status" value="1"/>
</dbReference>
<dbReference type="HAMAP" id="MF_01530">
    <property type="entry name" value="MFS_MdtL"/>
    <property type="match status" value="1"/>
</dbReference>
<dbReference type="InterPro" id="IPR011701">
    <property type="entry name" value="MFS"/>
</dbReference>
<dbReference type="InterPro" id="IPR020846">
    <property type="entry name" value="MFS_dom"/>
</dbReference>
<dbReference type="InterPro" id="IPR050189">
    <property type="entry name" value="MFS_Efflux_Transporters"/>
</dbReference>
<dbReference type="InterPro" id="IPR036259">
    <property type="entry name" value="MFS_trans_sf"/>
</dbReference>
<dbReference type="InterPro" id="IPR023697">
    <property type="entry name" value="Multidrug-R_MdtL"/>
</dbReference>
<dbReference type="NCBIfam" id="NF007782">
    <property type="entry name" value="PRK10473.1"/>
    <property type="match status" value="1"/>
</dbReference>
<dbReference type="PANTHER" id="PTHR43124:SF3">
    <property type="entry name" value="CHLORAMPHENICOL EFFLUX PUMP RV0191"/>
    <property type="match status" value="1"/>
</dbReference>
<dbReference type="PANTHER" id="PTHR43124">
    <property type="entry name" value="PURINE EFFLUX PUMP PBUE"/>
    <property type="match status" value="1"/>
</dbReference>
<dbReference type="Pfam" id="PF07690">
    <property type="entry name" value="MFS_1"/>
    <property type="match status" value="1"/>
</dbReference>
<dbReference type="SUPFAM" id="SSF103473">
    <property type="entry name" value="MFS general substrate transporter"/>
    <property type="match status" value="1"/>
</dbReference>
<dbReference type="PROSITE" id="PS50850">
    <property type="entry name" value="MFS"/>
    <property type="match status" value="1"/>
</dbReference>
<protein>
    <recommendedName>
        <fullName evidence="1">Multidrug resistance protein MdtL</fullName>
    </recommendedName>
</protein>
<name>MDTL_ECO8A</name>
<gene>
    <name evidence="1" type="primary">mdtL</name>
    <name type="ordered locus">ECIAI1_3890</name>
</gene>
<organism>
    <name type="scientific">Escherichia coli O8 (strain IAI1)</name>
    <dbReference type="NCBI Taxonomy" id="585034"/>
    <lineage>
        <taxon>Bacteria</taxon>
        <taxon>Pseudomonadati</taxon>
        <taxon>Pseudomonadota</taxon>
        <taxon>Gammaproteobacteria</taxon>
        <taxon>Enterobacterales</taxon>
        <taxon>Enterobacteriaceae</taxon>
        <taxon>Escherichia</taxon>
    </lineage>
</organism>